<dbReference type="EC" id="5.3.1.9" evidence="1"/>
<dbReference type="EMBL" id="AE001363">
    <property type="protein sequence ID" value="AAD19162.1"/>
    <property type="molecule type" value="Genomic_DNA"/>
</dbReference>
<dbReference type="EMBL" id="AE002161">
    <property type="protein sequence ID" value="AAF38620.1"/>
    <property type="molecule type" value="Genomic_DNA"/>
</dbReference>
<dbReference type="EMBL" id="BA000008">
    <property type="protein sequence ID" value="BAA99232.1"/>
    <property type="molecule type" value="Genomic_DNA"/>
</dbReference>
<dbReference type="EMBL" id="AE009440">
    <property type="protein sequence ID" value="AAP98993.1"/>
    <property type="molecule type" value="Genomic_DNA"/>
</dbReference>
<dbReference type="PIR" id="B81533">
    <property type="entry name" value="B81533"/>
</dbReference>
<dbReference type="PIR" id="C72005">
    <property type="entry name" value="C72005"/>
</dbReference>
<dbReference type="PIR" id="F86618">
    <property type="entry name" value="F86618"/>
</dbReference>
<dbReference type="RefSeq" id="NP_225219.1">
    <property type="nucleotide sequence ID" value="NC_000922.1"/>
</dbReference>
<dbReference type="RefSeq" id="WP_010883658.1">
    <property type="nucleotide sequence ID" value="NZ_LN847257.1"/>
</dbReference>
<dbReference type="RefSeq" id="WP_010895403.1">
    <property type="nucleotide sequence ID" value="NZ_LN846995.1"/>
</dbReference>
<dbReference type="SMR" id="Q9Z6N4"/>
<dbReference type="STRING" id="406984.CPK_ORF00452"/>
<dbReference type="GeneID" id="45051083"/>
<dbReference type="KEGG" id="cpa:CP_0827"/>
<dbReference type="KEGG" id="cpj:pgi"/>
<dbReference type="KEGG" id="cpn:CPn_1025"/>
<dbReference type="KEGG" id="cpt:CpB1064"/>
<dbReference type="PATRIC" id="fig|115713.3.peg.1123"/>
<dbReference type="eggNOG" id="COG0166">
    <property type="taxonomic scope" value="Bacteria"/>
</dbReference>
<dbReference type="HOGENOM" id="CLU_017947_3_1_0"/>
<dbReference type="OrthoDB" id="140919at2"/>
<dbReference type="UniPathway" id="UPA00109">
    <property type="reaction ID" value="UER00181"/>
</dbReference>
<dbReference type="UniPathway" id="UPA00138"/>
<dbReference type="Proteomes" id="UP000000583">
    <property type="component" value="Chromosome"/>
</dbReference>
<dbReference type="Proteomes" id="UP000000801">
    <property type="component" value="Chromosome"/>
</dbReference>
<dbReference type="GO" id="GO:0005829">
    <property type="term" value="C:cytosol"/>
    <property type="evidence" value="ECO:0007669"/>
    <property type="project" value="TreeGrafter"/>
</dbReference>
<dbReference type="GO" id="GO:0097367">
    <property type="term" value="F:carbohydrate derivative binding"/>
    <property type="evidence" value="ECO:0007669"/>
    <property type="project" value="InterPro"/>
</dbReference>
<dbReference type="GO" id="GO:0004347">
    <property type="term" value="F:glucose-6-phosphate isomerase activity"/>
    <property type="evidence" value="ECO:0007669"/>
    <property type="project" value="UniProtKB-UniRule"/>
</dbReference>
<dbReference type="GO" id="GO:0048029">
    <property type="term" value="F:monosaccharide binding"/>
    <property type="evidence" value="ECO:0007669"/>
    <property type="project" value="TreeGrafter"/>
</dbReference>
<dbReference type="GO" id="GO:0006094">
    <property type="term" value="P:gluconeogenesis"/>
    <property type="evidence" value="ECO:0007669"/>
    <property type="project" value="UniProtKB-UniRule"/>
</dbReference>
<dbReference type="GO" id="GO:0051156">
    <property type="term" value="P:glucose 6-phosphate metabolic process"/>
    <property type="evidence" value="ECO:0007669"/>
    <property type="project" value="TreeGrafter"/>
</dbReference>
<dbReference type="GO" id="GO:0006096">
    <property type="term" value="P:glycolytic process"/>
    <property type="evidence" value="ECO:0007669"/>
    <property type="project" value="UniProtKB-UniRule"/>
</dbReference>
<dbReference type="CDD" id="cd05015">
    <property type="entry name" value="SIS_PGI_1"/>
    <property type="match status" value="1"/>
</dbReference>
<dbReference type="CDD" id="cd05016">
    <property type="entry name" value="SIS_PGI_2"/>
    <property type="match status" value="1"/>
</dbReference>
<dbReference type="Gene3D" id="1.10.1390.10">
    <property type="match status" value="1"/>
</dbReference>
<dbReference type="Gene3D" id="3.40.50.10490">
    <property type="entry name" value="Glucose-6-phosphate isomerase like protein, domain 1"/>
    <property type="match status" value="2"/>
</dbReference>
<dbReference type="HAMAP" id="MF_00473">
    <property type="entry name" value="G6P_isomerase"/>
    <property type="match status" value="1"/>
</dbReference>
<dbReference type="InterPro" id="IPR001672">
    <property type="entry name" value="G6P_Isomerase"/>
</dbReference>
<dbReference type="InterPro" id="IPR023096">
    <property type="entry name" value="G6P_Isomerase_C"/>
</dbReference>
<dbReference type="InterPro" id="IPR018189">
    <property type="entry name" value="Phosphoglucose_isomerase_CS"/>
</dbReference>
<dbReference type="InterPro" id="IPR046348">
    <property type="entry name" value="SIS_dom_sf"/>
</dbReference>
<dbReference type="InterPro" id="IPR035476">
    <property type="entry name" value="SIS_PGI_1"/>
</dbReference>
<dbReference type="InterPro" id="IPR035482">
    <property type="entry name" value="SIS_PGI_2"/>
</dbReference>
<dbReference type="NCBIfam" id="NF010695">
    <property type="entry name" value="PRK14095.1"/>
    <property type="match status" value="1"/>
</dbReference>
<dbReference type="PANTHER" id="PTHR11469">
    <property type="entry name" value="GLUCOSE-6-PHOSPHATE ISOMERASE"/>
    <property type="match status" value="1"/>
</dbReference>
<dbReference type="PANTHER" id="PTHR11469:SF1">
    <property type="entry name" value="GLUCOSE-6-PHOSPHATE ISOMERASE"/>
    <property type="match status" value="1"/>
</dbReference>
<dbReference type="Pfam" id="PF00342">
    <property type="entry name" value="PGI"/>
    <property type="match status" value="1"/>
</dbReference>
<dbReference type="PRINTS" id="PR00662">
    <property type="entry name" value="G6PISOMERASE"/>
</dbReference>
<dbReference type="SUPFAM" id="SSF53697">
    <property type="entry name" value="SIS domain"/>
    <property type="match status" value="1"/>
</dbReference>
<dbReference type="PROSITE" id="PS00765">
    <property type="entry name" value="P_GLUCOSE_ISOMERASE_1"/>
    <property type="match status" value="1"/>
</dbReference>
<dbReference type="PROSITE" id="PS00174">
    <property type="entry name" value="P_GLUCOSE_ISOMERASE_2"/>
    <property type="match status" value="1"/>
</dbReference>
<dbReference type="PROSITE" id="PS51463">
    <property type="entry name" value="P_GLUCOSE_ISOMERASE_3"/>
    <property type="match status" value="1"/>
</dbReference>
<gene>
    <name evidence="1" type="primary">pgi</name>
    <name type="ordered locus">CPn_1025</name>
    <name type="ordered locus">CP_0827</name>
    <name type="ordered locus">CpB1064</name>
</gene>
<reference key="1">
    <citation type="journal article" date="1999" name="Nat. Genet.">
        <title>Comparative genomes of Chlamydia pneumoniae and C. trachomatis.</title>
        <authorList>
            <person name="Kalman S."/>
            <person name="Mitchell W.P."/>
            <person name="Marathe R."/>
            <person name="Lammel C.J."/>
            <person name="Fan J."/>
            <person name="Hyman R.W."/>
            <person name="Olinger L."/>
            <person name="Grimwood J."/>
            <person name="Davis R.W."/>
            <person name="Stephens R.S."/>
        </authorList>
    </citation>
    <scope>NUCLEOTIDE SEQUENCE [LARGE SCALE GENOMIC DNA]</scope>
    <source>
        <strain>CWL029</strain>
    </source>
</reference>
<reference key="2">
    <citation type="journal article" date="2000" name="Nucleic Acids Res.">
        <title>Genome sequences of Chlamydia trachomatis MoPn and Chlamydia pneumoniae AR39.</title>
        <authorList>
            <person name="Read T.D."/>
            <person name="Brunham R.C."/>
            <person name="Shen C."/>
            <person name="Gill S.R."/>
            <person name="Heidelberg J.F."/>
            <person name="White O."/>
            <person name="Hickey E.K."/>
            <person name="Peterson J.D."/>
            <person name="Utterback T.R."/>
            <person name="Berry K.J."/>
            <person name="Bass S."/>
            <person name="Linher K.D."/>
            <person name="Weidman J.F."/>
            <person name="Khouri H.M."/>
            <person name="Craven B."/>
            <person name="Bowman C."/>
            <person name="Dodson R.J."/>
            <person name="Gwinn M.L."/>
            <person name="Nelson W.C."/>
            <person name="DeBoy R.T."/>
            <person name="Kolonay J.F."/>
            <person name="McClarty G."/>
            <person name="Salzberg S.L."/>
            <person name="Eisen J.A."/>
            <person name="Fraser C.M."/>
        </authorList>
    </citation>
    <scope>NUCLEOTIDE SEQUENCE [LARGE SCALE GENOMIC DNA]</scope>
    <source>
        <strain>AR39</strain>
    </source>
</reference>
<reference key="3">
    <citation type="journal article" date="2000" name="Nucleic Acids Res.">
        <title>Comparison of whole genome sequences of Chlamydia pneumoniae J138 from Japan and CWL029 from USA.</title>
        <authorList>
            <person name="Shirai M."/>
            <person name="Hirakawa H."/>
            <person name="Kimoto M."/>
            <person name="Tabuchi M."/>
            <person name="Kishi F."/>
            <person name="Ouchi K."/>
            <person name="Shiba T."/>
            <person name="Ishii K."/>
            <person name="Hattori M."/>
            <person name="Kuhara S."/>
            <person name="Nakazawa T."/>
        </authorList>
    </citation>
    <scope>NUCLEOTIDE SEQUENCE [LARGE SCALE GENOMIC DNA]</scope>
    <source>
        <strain>J138</strain>
    </source>
</reference>
<reference key="4">
    <citation type="submission" date="2002-05" db="EMBL/GenBank/DDBJ databases">
        <title>The genome sequence of Chlamydia pneumoniae TW183 and comparison with other Chlamydia strains based on whole genome sequence analysis.</title>
        <authorList>
            <person name="Geng M.M."/>
            <person name="Schuhmacher A."/>
            <person name="Muehldorfer I."/>
            <person name="Bensch K.W."/>
            <person name="Schaefer K.P."/>
            <person name="Schneider S."/>
            <person name="Pohl T."/>
            <person name="Essig A."/>
            <person name="Marre R."/>
            <person name="Melchers K."/>
        </authorList>
    </citation>
    <scope>NUCLEOTIDE SEQUENCE [LARGE SCALE GENOMIC DNA]</scope>
    <source>
        <strain>TW-183</strain>
    </source>
</reference>
<comment type="function">
    <text evidence="1">Catalyzes the reversible isomerization of glucose-6-phosphate to fructose-6-phosphate.</text>
</comment>
<comment type="catalytic activity">
    <reaction evidence="1">
        <text>alpha-D-glucose 6-phosphate = beta-D-fructose 6-phosphate</text>
        <dbReference type="Rhea" id="RHEA:11816"/>
        <dbReference type="ChEBI" id="CHEBI:57634"/>
        <dbReference type="ChEBI" id="CHEBI:58225"/>
        <dbReference type="EC" id="5.3.1.9"/>
    </reaction>
</comment>
<comment type="pathway">
    <text evidence="1">Carbohydrate biosynthesis; gluconeogenesis.</text>
</comment>
<comment type="pathway">
    <text evidence="1">Carbohydrate degradation; glycolysis; D-glyceraldehyde 3-phosphate and glycerone phosphate from D-glucose: step 2/4.</text>
</comment>
<comment type="subcellular location">
    <subcellularLocation>
        <location evidence="1">Cytoplasm</location>
    </subcellularLocation>
</comment>
<comment type="similarity">
    <text evidence="1 2">Belongs to the GPI family.</text>
</comment>
<feature type="chain" id="PRO_0000180619" description="Glucose-6-phosphate isomerase">
    <location>
        <begin position="1"/>
        <end position="526"/>
    </location>
</feature>
<feature type="active site" description="Proton donor" evidence="1">
    <location>
        <position position="347"/>
    </location>
</feature>
<feature type="active site" evidence="1">
    <location>
        <position position="378"/>
    </location>
</feature>
<feature type="active site" evidence="1">
    <location>
        <position position="493"/>
    </location>
</feature>
<feature type="sequence variant" description="In strain: CWL029 and TW-183.">
    <original>V</original>
    <variation>A</variation>
    <location>
        <position position="354"/>
    </location>
</feature>
<feature type="sequence conflict" description="In Ref. 2; AAF38620." evidence="2" ref="2">
    <original>L</original>
    <variation>W</variation>
    <location>
        <position position="41"/>
    </location>
</feature>
<feature type="sequence conflict" description="In Ref. 1; AAD19162." evidence="2" ref="1">
    <original>F</original>
    <variation>L</variation>
    <location>
        <position position="477"/>
    </location>
</feature>
<keyword id="KW-0963">Cytoplasm</keyword>
<keyword id="KW-0312">Gluconeogenesis</keyword>
<keyword id="KW-0324">Glycolysis</keyword>
<keyword id="KW-0413">Isomerase</keyword>
<name>G6PI_CHLPN</name>
<sequence>MERKRFIDCDSTKILQELALNPLDLTAPGVLSAERIKKFSLLGGGFTFSFATERLDDAILAALISLAEERGLHESMLAMQQGQVVNYIEGFPSEMRPALHTATRAWVTDSSFTGEAEDIAVRSRVEAQRLKDFLTKVRSQFTTIVQIGIGGSELGPKALYRALRAYCPTDKHVHFISNIDPDNGAEVLDTIDCAKALVVVVSKSGTTIETAVNEAFFADYFAKKGLSFKDHFIAVTCEGSPMDDTGKYLEVFHLWESIGGRFSSTSMVGGVVLGFAYGFEVFLQLLQGASAMDQIALQPNARENLPMLSALISIWNRNFLGYPTEAVIPYSSGLEFFPAHLQQCCMESNGKSIVQDGRRVGFSTSPVIWGEPGTNGQHSFFQCLHQGTDIIPVEFIGFEKSQKGEDISFQGTTSSQKLFANMIAQAIALACGSENTNPNKNFDGNRPSSVLVSSQLNPYSLGELLSYYENKIVFQGFCWGINSFDQEGVSLGKALANRVLELLEGADASNFPEAASLLTLFNIKFR</sequence>
<organism>
    <name type="scientific">Chlamydia pneumoniae</name>
    <name type="common">Chlamydophila pneumoniae</name>
    <dbReference type="NCBI Taxonomy" id="83558"/>
    <lineage>
        <taxon>Bacteria</taxon>
        <taxon>Pseudomonadati</taxon>
        <taxon>Chlamydiota</taxon>
        <taxon>Chlamydiia</taxon>
        <taxon>Chlamydiales</taxon>
        <taxon>Chlamydiaceae</taxon>
        <taxon>Chlamydia/Chlamydophila group</taxon>
        <taxon>Chlamydia</taxon>
    </lineage>
</organism>
<accession>Q9Z6N4</accession>
<accession>Q9JS76</accession>
<accession>Q9K1X5</accession>
<evidence type="ECO:0000255" key="1">
    <source>
        <dbReference type="HAMAP-Rule" id="MF_00473"/>
    </source>
</evidence>
<evidence type="ECO:0000305" key="2"/>
<protein>
    <recommendedName>
        <fullName evidence="1">Glucose-6-phosphate isomerase</fullName>
        <shortName evidence="1">GPI</shortName>
        <ecNumber evidence="1">5.3.1.9</ecNumber>
    </recommendedName>
    <alternativeName>
        <fullName evidence="1">Phosphoglucose isomerase</fullName>
        <shortName evidence="1">PGI</shortName>
    </alternativeName>
    <alternativeName>
        <fullName evidence="1">Phosphohexose isomerase</fullName>
        <shortName evidence="1">PHI</shortName>
    </alternativeName>
</protein>
<proteinExistence type="inferred from homology"/>